<organism>
    <name type="scientific">Cavia porcellus</name>
    <name type="common">Guinea pig</name>
    <dbReference type="NCBI Taxonomy" id="10141"/>
    <lineage>
        <taxon>Eukaryota</taxon>
        <taxon>Metazoa</taxon>
        <taxon>Chordata</taxon>
        <taxon>Craniata</taxon>
        <taxon>Vertebrata</taxon>
        <taxon>Euteleostomi</taxon>
        <taxon>Mammalia</taxon>
        <taxon>Eutheria</taxon>
        <taxon>Euarchontoglires</taxon>
        <taxon>Glires</taxon>
        <taxon>Rodentia</taxon>
        <taxon>Hystricomorpha</taxon>
        <taxon>Caviidae</taxon>
        <taxon>Cavia</taxon>
    </lineage>
</organism>
<evidence type="ECO:0000250" key="1">
    <source>
        <dbReference type="UniProtKB" id="O35427"/>
    </source>
</evidence>
<evidence type="ECO:0000250" key="2">
    <source>
        <dbReference type="UniProtKB" id="O75575"/>
    </source>
</evidence>
<evidence type="ECO:0000250" key="3">
    <source>
        <dbReference type="UniProtKB" id="Q9C0Z9"/>
    </source>
</evidence>
<evidence type="ECO:0000305" key="4"/>
<gene>
    <name type="primary">CRCP</name>
</gene>
<proteinExistence type="evidence at transcript level"/>
<accession>Q60482</accession>
<keyword id="KW-1003">Cell membrane</keyword>
<keyword id="KW-0240">DNA-directed RNA polymerase</keyword>
<keyword id="KW-0472">Membrane</keyword>
<keyword id="KW-0539">Nucleus</keyword>
<keyword id="KW-1185">Reference proteome</keyword>
<keyword id="KW-0804">Transcription</keyword>
<name>RPC9_CAVPO</name>
<sequence length="146" mass="16781">MEVKDANSALLSNYEVFQLLTDLKDQRRESGKMKHSAGQQNLNTITYETLKYLSKTPCRHQSPEIVREFLTAMKSHKLTKAEKLQLLNHRPMTAVEIQLMVEETEERFTEEEQIEALLHTVTHILPAEPEVEQMASTEAMEEEGPA</sequence>
<comment type="function">
    <text evidence="2 3">DNA-dependent RNA polymerase catalyzes the transcription of DNA into RNA using the four ribonucleoside triphosphates as substrates (By similarity). Specific peripheric component of RNA polymerase III (Pol III) which synthesizes small non-coding RNAs including 5S rRNA, snRNAs, tRNAs and miRNAs from at least 500 distinct genomic loci. With POLR3H/RPC8 forms a mobile stalk that protrudes from Pol III core and functions primarily in transcription initiation (By similarity). Pol III plays a key role in sensing and limiting infection by intracellular bacteria and DNA viruses. Acts as nuclear and cytosolic DNA sensor involved in innate immune response. Can sense non-self dsDNA that serves as template for transcription into dsRNA. The non-self RNA polymerase III transcripts, such as Epstein-Barr virus-encoded RNAs (EBERs) induce type I interferon and NF-kappa-B through the RIG-I pathway (By similarity).</text>
</comment>
<comment type="function">
    <text evidence="1">Accessory protein for the calcitonin gene-related peptide (CGRP) receptor. It modulates CGRP responsiveness in a variety of tissues.</text>
</comment>
<comment type="subunit">
    <text evidence="2">Component of the RNA polymerase III complex consisting of 17 subunits: a ten-subunit horseshoe-shaped catalytic core composed of POLR3A/RPC1, POLR3B/RPC2, POLR1C/RPAC1, POLR1D/RPAC2, POLR3K/RPC10, POLR2E/RPABC1, POLR2F/RPABC2, POLR2H/RPABC3, POLR2K/RPABC4 and POLR2L/RPABC5; a mobile stalk composed of two subunits POLR3H/RPC8 and CRCP/RPC9, protruding from the core and functioning primarily in transcription initiation; and additional subunits homologous to general transcription factors of the RNA polymerase II machinery, POLR3C/RPC3-POLR3F/RPC6-POLR3G/RPC7 heterotrimer required for transcription initiation and POLR3D/RPC4-POLR3E/RPC5 heterodimer involved in both transcription initiation and termination.</text>
</comment>
<comment type="subcellular location">
    <subcellularLocation>
        <location evidence="2">Nucleus</location>
    </subcellularLocation>
    <subcellularLocation>
        <location evidence="1">Cell membrane</location>
        <topology evidence="1">Peripheral membrane protein</topology>
        <orientation evidence="1">Cytoplasmic side</orientation>
    </subcellularLocation>
</comment>
<comment type="similarity">
    <text evidence="4">Belongs to the eukaryotic RPC9 RNA polymerase subunit family.</text>
</comment>
<feature type="chain" id="PRO_0000079334" description="DNA-directed RNA polymerase III subunit RPC9">
    <location>
        <begin position="1"/>
        <end position="146"/>
    </location>
</feature>
<reference key="1">
    <citation type="journal article" date="1996" name="Proc. Natl. Acad. Sci. U.S.A.">
        <title>Identification of a protein that confers calcitonin gene-related peptide responsiveness to oocytes by using a cystic fibrosis transmembrane conductance regulator assay.</title>
        <authorList>
            <person name="Luebke A.E."/>
            <person name="Dahl G.P."/>
            <person name="Roos B.A."/>
            <person name="Dickerson I.M."/>
        </authorList>
    </citation>
    <scope>NUCLEOTIDE SEQUENCE [MRNA]</scope>
    <source>
        <tissue>Organ of Corti</tissue>
    </source>
</reference>
<protein>
    <recommendedName>
        <fullName>DNA-directed RNA polymerase III subunit RPC9</fullName>
        <shortName>RNA polymerase III subunit C9</shortName>
    </recommendedName>
    <alternativeName>
        <fullName>Calcitonin gene-related peptide-receptor component protein</fullName>
        <shortName>CGRP-RCP</shortName>
        <shortName>CGRP-receptor component protein</shortName>
        <shortName>CGRPRCP</shortName>
    </alternativeName>
</protein>
<dbReference type="EMBL" id="U50188">
    <property type="protein sequence ID" value="AAC52509.1"/>
    <property type="molecule type" value="mRNA"/>
</dbReference>
<dbReference type="RefSeq" id="NP_001166404.1">
    <property type="nucleotide sequence ID" value="NM_001172933.1"/>
</dbReference>
<dbReference type="SMR" id="Q60482"/>
<dbReference type="FunCoup" id="Q60482">
    <property type="interactions" value="720"/>
</dbReference>
<dbReference type="STRING" id="10141.ENSCPOP00000017525"/>
<dbReference type="GeneID" id="100135504"/>
<dbReference type="KEGG" id="cpoc:100135504"/>
<dbReference type="CTD" id="27297"/>
<dbReference type="eggNOG" id="KOG4168">
    <property type="taxonomic scope" value="Eukaryota"/>
</dbReference>
<dbReference type="InParanoid" id="Q60482"/>
<dbReference type="OrthoDB" id="1746530at2759"/>
<dbReference type="Proteomes" id="UP000005447">
    <property type="component" value="Unassembled WGS sequence"/>
</dbReference>
<dbReference type="GO" id="GO:0009360">
    <property type="term" value="C:DNA polymerase III complex"/>
    <property type="evidence" value="ECO:0000250"/>
    <property type="project" value="UniProtKB"/>
</dbReference>
<dbReference type="GO" id="GO:0005886">
    <property type="term" value="C:plasma membrane"/>
    <property type="evidence" value="ECO:0007669"/>
    <property type="project" value="UniProtKB-SubCell"/>
</dbReference>
<dbReference type="GO" id="GO:0005666">
    <property type="term" value="C:RNA polymerase III complex"/>
    <property type="evidence" value="ECO:0007669"/>
    <property type="project" value="InterPro"/>
</dbReference>
<dbReference type="GO" id="GO:0003899">
    <property type="term" value="F:DNA-directed RNA polymerase activity"/>
    <property type="evidence" value="ECO:0000250"/>
    <property type="project" value="UniProtKB"/>
</dbReference>
<dbReference type="GO" id="GO:0000166">
    <property type="term" value="F:nucleotide binding"/>
    <property type="evidence" value="ECO:0007669"/>
    <property type="project" value="InterPro"/>
</dbReference>
<dbReference type="GO" id="GO:0006383">
    <property type="term" value="P:transcription by RNA polymerase III"/>
    <property type="evidence" value="ECO:0000250"/>
    <property type="project" value="UniProtKB"/>
</dbReference>
<dbReference type="GO" id="GO:0006384">
    <property type="term" value="P:transcription initiation at RNA polymerase III promoter"/>
    <property type="evidence" value="ECO:0007669"/>
    <property type="project" value="InterPro"/>
</dbReference>
<dbReference type="FunFam" id="1.20.1250.40:FF:000002">
    <property type="entry name" value="DNA-directed RNA polymerase III subunit RPC9"/>
    <property type="match status" value="1"/>
</dbReference>
<dbReference type="Gene3D" id="1.20.1250.40">
    <property type="match status" value="1"/>
</dbReference>
<dbReference type="InterPro" id="IPR010997">
    <property type="entry name" value="HRDC-like_sf"/>
</dbReference>
<dbReference type="InterPro" id="IPR006590">
    <property type="entry name" value="RNA_pol_Rpb4/RPC9_core"/>
</dbReference>
<dbReference type="InterPro" id="IPR005574">
    <property type="entry name" value="Rpb4/RPC9"/>
</dbReference>
<dbReference type="InterPro" id="IPR038324">
    <property type="entry name" value="Rpb4/RPC9_sf"/>
</dbReference>
<dbReference type="InterPro" id="IPR038846">
    <property type="entry name" value="RPC9"/>
</dbReference>
<dbReference type="PANTHER" id="PTHR15561">
    <property type="entry name" value="CALCITONIN GENE-RELATED PEPTIDE-RECEPTOR COMPONENT PROTEIN"/>
    <property type="match status" value="1"/>
</dbReference>
<dbReference type="PANTHER" id="PTHR15561:SF0">
    <property type="entry name" value="DNA-DIRECTED RNA POLYMERASE III SUBUNIT RPC9"/>
    <property type="match status" value="1"/>
</dbReference>
<dbReference type="Pfam" id="PF03874">
    <property type="entry name" value="RNA_pol_Rpb4"/>
    <property type="match status" value="1"/>
</dbReference>
<dbReference type="SMART" id="SM00657">
    <property type="entry name" value="RPOL4c"/>
    <property type="match status" value="1"/>
</dbReference>
<dbReference type="SUPFAM" id="SSF47819">
    <property type="entry name" value="HRDC-like"/>
    <property type="match status" value="1"/>
</dbReference>